<proteinExistence type="evidence at protein level"/>
<sequence length="76" mass="8920">MAKSKNHTNHNQNKKAHRNGIKRPLRKRHESTLGMDVKFLINQRYARKGNLSREESVKRYNERIASQKGKPKPVTL</sequence>
<reference key="1">
    <citation type="journal article" date="1997" name="DNA Seq.">
        <title>A cDNA encodes the Drosophila homolog of yeast 60S ribosomal protein YL43.</title>
        <authorList>
            <person name="Fox M.G."/>
            <person name="Gaynor J.J."/>
        </authorList>
    </citation>
    <scope>NUCLEOTIDE SEQUENCE [MRNA]</scope>
</reference>
<reference key="2">
    <citation type="journal article" date="2000" name="Science">
        <title>The genome sequence of Drosophila melanogaster.</title>
        <authorList>
            <person name="Adams M.D."/>
            <person name="Celniker S.E."/>
            <person name="Holt R.A."/>
            <person name="Evans C.A."/>
            <person name="Gocayne J.D."/>
            <person name="Amanatides P.G."/>
            <person name="Scherer S.E."/>
            <person name="Li P.W."/>
            <person name="Hoskins R.A."/>
            <person name="Galle R.F."/>
            <person name="George R.A."/>
            <person name="Lewis S.E."/>
            <person name="Richards S."/>
            <person name="Ashburner M."/>
            <person name="Henderson S.N."/>
            <person name="Sutton G.G."/>
            <person name="Wortman J.R."/>
            <person name="Yandell M.D."/>
            <person name="Zhang Q."/>
            <person name="Chen L.X."/>
            <person name="Brandon R.C."/>
            <person name="Rogers Y.-H.C."/>
            <person name="Blazej R.G."/>
            <person name="Champe M."/>
            <person name="Pfeiffer B.D."/>
            <person name="Wan K.H."/>
            <person name="Doyle C."/>
            <person name="Baxter E.G."/>
            <person name="Helt G."/>
            <person name="Nelson C.R."/>
            <person name="Miklos G.L.G."/>
            <person name="Abril J.F."/>
            <person name="Agbayani A."/>
            <person name="An H.-J."/>
            <person name="Andrews-Pfannkoch C."/>
            <person name="Baldwin D."/>
            <person name="Ballew R.M."/>
            <person name="Basu A."/>
            <person name="Baxendale J."/>
            <person name="Bayraktaroglu L."/>
            <person name="Beasley E.M."/>
            <person name="Beeson K.Y."/>
            <person name="Benos P.V."/>
            <person name="Berman B.P."/>
            <person name="Bhandari D."/>
            <person name="Bolshakov S."/>
            <person name="Borkova D."/>
            <person name="Botchan M.R."/>
            <person name="Bouck J."/>
            <person name="Brokstein P."/>
            <person name="Brottier P."/>
            <person name="Burtis K.C."/>
            <person name="Busam D.A."/>
            <person name="Butler H."/>
            <person name="Cadieu E."/>
            <person name="Center A."/>
            <person name="Chandra I."/>
            <person name="Cherry J.M."/>
            <person name="Cawley S."/>
            <person name="Dahlke C."/>
            <person name="Davenport L.B."/>
            <person name="Davies P."/>
            <person name="de Pablos B."/>
            <person name="Delcher A."/>
            <person name="Deng Z."/>
            <person name="Mays A.D."/>
            <person name="Dew I."/>
            <person name="Dietz S.M."/>
            <person name="Dodson K."/>
            <person name="Doup L.E."/>
            <person name="Downes M."/>
            <person name="Dugan-Rocha S."/>
            <person name="Dunkov B.C."/>
            <person name="Dunn P."/>
            <person name="Durbin K.J."/>
            <person name="Evangelista C.C."/>
            <person name="Ferraz C."/>
            <person name="Ferriera S."/>
            <person name="Fleischmann W."/>
            <person name="Fosler C."/>
            <person name="Gabrielian A.E."/>
            <person name="Garg N.S."/>
            <person name="Gelbart W.M."/>
            <person name="Glasser K."/>
            <person name="Glodek A."/>
            <person name="Gong F."/>
            <person name="Gorrell J.H."/>
            <person name="Gu Z."/>
            <person name="Guan P."/>
            <person name="Harris M."/>
            <person name="Harris N.L."/>
            <person name="Harvey D.A."/>
            <person name="Heiman T.J."/>
            <person name="Hernandez J.R."/>
            <person name="Houck J."/>
            <person name="Hostin D."/>
            <person name="Houston K.A."/>
            <person name="Howland T.J."/>
            <person name="Wei M.-H."/>
            <person name="Ibegwam C."/>
            <person name="Jalali M."/>
            <person name="Kalush F."/>
            <person name="Karpen G.H."/>
            <person name="Ke Z."/>
            <person name="Kennison J.A."/>
            <person name="Ketchum K.A."/>
            <person name="Kimmel B.E."/>
            <person name="Kodira C.D."/>
            <person name="Kraft C.L."/>
            <person name="Kravitz S."/>
            <person name="Kulp D."/>
            <person name="Lai Z."/>
            <person name="Lasko P."/>
            <person name="Lei Y."/>
            <person name="Levitsky A.A."/>
            <person name="Li J.H."/>
            <person name="Li Z."/>
            <person name="Liang Y."/>
            <person name="Lin X."/>
            <person name="Liu X."/>
            <person name="Mattei B."/>
            <person name="McIntosh T.C."/>
            <person name="McLeod M.P."/>
            <person name="McPherson D."/>
            <person name="Merkulov G."/>
            <person name="Milshina N.V."/>
            <person name="Mobarry C."/>
            <person name="Morris J."/>
            <person name="Moshrefi A."/>
            <person name="Mount S.M."/>
            <person name="Moy M."/>
            <person name="Murphy B."/>
            <person name="Murphy L."/>
            <person name="Muzny D.M."/>
            <person name="Nelson D.L."/>
            <person name="Nelson D.R."/>
            <person name="Nelson K.A."/>
            <person name="Nixon K."/>
            <person name="Nusskern D.R."/>
            <person name="Pacleb J.M."/>
            <person name="Palazzolo M."/>
            <person name="Pittman G.S."/>
            <person name="Pan S."/>
            <person name="Pollard J."/>
            <person name="Puri V."/>
            <person name="Reese M.G."/>
            <person name="Reinert K."/>
            <person name="Remington K."/>
            <person name="Saunders R.D.C."/>
            <person name="Scheeler F."/>
            <person name="Shen H."/>
            <person name="Shue B.C."/>
            <person name="Siden-Kiamos I."/>
            <person name="Simpson M."/>
            <person name="Skupski M.P."/>
            <person name="Smith T.J."/>
            <person name="Spier E."/>
            <person name="Spradling A.C."/>
            <person name="Stapleton M."/>
            <person name="Strong R."/>
            <person name="Sun E."/>
            <person name="Svirskas R."/>
            <person name="Tector C."/>
            <person name="Turner R."/>
            <person name="Venter E."/>
            <person name="Wang A.H."/>
            <person name="Wang X."/>
            <person name="Wang Z.-Y."/>
            <person name="Wassarman D.A."/>
            <person name="Weinstock G.M."/>
            <person name="Weissenbach J."/>
            <person name="Williams S.M."/>
            <person name="Woodage T."/>
            <person name="Worley K.C."/>
            <person name="Wu D."/>
            <person name="Yang S."/>
            <person name="Yao Q.A."/>
            <person name="Ye J."/>
            <person name="Yeh R.-F."/>
            <person name="Zaveri J.S."/>
            <person name="Zhan M."/>
            <person name="Zhang G."/>
            <person name="Zhao Q."/>
            <person name="Zheng L."/>
            <person name="Zheng X.H."/>
            <person name="Zhong F.N."/>
            <person name="Zhong W."/>
            <person name="Zhou X."/>
            <person name="Zhu S.C."/>
            <person name="Zhu X."/>
            <person name="Smith H.O."/>
            <person name="Gibbs R.A."/>
            <person name="Myers E.W."/>
            <person name="Rubin G.M."/>
            <person name="Venter J.C."/>
        </authorList>
    </citation>
    <scope>NUCLEOTIDE SEQUENCE [LARGE SCALE GENOMIC DNA]</scope>
    <source>
        <strain>Berkeley</strain>
    </source>
</reference>
<reference key="3">
    <citation type="journal article" date="2002" name="Genome Biol.">
        <title>Annotation of the Drosophila melanogaster euchromatic genome: a systematic review.</title>
        <authorList>
            <person name="Misra S."/>
            <person name="Crosby M.A."/>
            <person name="Mungall C.J."/>
            <person name="Matthews B.B."/>
            <person name="Campbell K.S."/>
            <person name="Hradecky P."/>
            <person name="Huang Y."/>
            <person name="Kaminker J.S."/>
            <person name="Millburn G.H."/>
            <person name="Prochnik S.E."/>
            <person name="Smith C.D."/>
            <person name="Tupy J.L."/>
            <person name="Whitfield E.J."/>
            <person name="Bayraktaroglu L."/>
            <person name="Berman B.P."/>
            <person name="Bettencourt B.R."/>
            <person name="Celniker S.E."/>
            <person name="de Grey A.D.N.J."/>
            <person name="Drysdale R.A."/>
            <person name="Harris N.L."/>
            <person name="Richter J."/>
            <person name="Russo S."/>
            <person name="Schroeder A.J."/>
            <person name="Shu S.Q."/>
            <person name="Stapleton M."/>
            <person name="Yamada C."/>
            <person name="Ashburner M."/>
            <person name="Gelbart W.M."/>
            <person name="Rubin G.M."/>
            <person name="Lewis S.E."/>
        </authorList>
    </citation>
    <scope>GENOME REANNOTATION</scope>
    <source>
        <strain>Berkeley</strain>
    </source>
</reference>
<reference key="4">
    <citation type="journal article" date="2008" name="J. Proteome Res.">
        <title>Phosphoproteome analysis of Drosophila melanogaster embryos.</title>
        <authorList>
            <person name="Zhai B."/>
            <person name="Villen J."/>
            <person name="Beausoleil S.A."/>
            <person name="Mintseris J."/>
            <person name="Gygi S.P."/>
        </authorList>
    </citation>
    <scope>PHOSPHORYLATION [LARGE SCALE ANALYSIS] AT SER-31</scope>
    <scope>IDENTIFICATION BY MASS SPECTROMETRY</scope>
    <source>
        <tissue>Embryo</tissue>
    </source>
</reference>
<reference key="5">
    <citation type="journal article" date="2013" name="Nature">
        <title>Structures of the human and Drosophila 80S ribosome.</title>
        <authorList>
            <person name="Anger A.M."/>
            <person name="Armache J.P."/>
            <person name="Berninghausen O."/>
            <person name="Habeck M."/>
            <person name="Subklewe M."/>
            <person name="Wilson D.N."/>
            <person name="Beckmann R."/>
        </authorList>
    </citation>
    <scope>STRUCTURE BY ELECTRON MICROSCOPY (6.0 ANGSTROMS) OF THE 80S RIBOSOME</scope>
</reference>
<name>RL29_DROME</name>
<feature type="chain" id="PRO_0000219139" description="Large ribosomal subunit protein eL29">
    <location>
        <begin position="1"/>
        <end position="76"/>
    </location>
</feature>
<feature type="region of interest" description="Disordered" evidence="1">
    <location>
        <begin position="1"/>
        <end position="33"/>
    </location>
</feature>
<feature type="region of interest" description="Disordered" evidence="1">
    <location>
        <begin position="47"/>
        <end position="76"/>
    </location>
</feature>
<feature type="compositionally biased region" description="Basic residues" evidence="1">
    <location>
        <begin position="1"/>
        <end position="29"/>
    </location>
</feature>
<feature type="compositionally biased region" description="Basic and acidic residues" evidence="1">
    <location>
        <begin position="51"/>
        <end position="62"/>
    </location>
</feature>
<feature type="modified residue" description="Phosphoserine" evidence="2">
    <location>
        <position position="31"/>
    </location>
</feature>
<gene>
    <name type="primary">RpL29</name>
    <name type="synonym">RpL43</name>
    <name type="ORF">CG10071</name>
</gene>
<comment type="similarity">
    <text evidence="3">Belongs to the eukaryotic ribosomal protein eL29 family.</text>
</comment>
<dbReference type="EMBL" id="U40226">
    <property type="protein sequence ID" value="AAB01760.1"/>
    <property type="molecule type" value="mRNA"/>
</dbReference>
<dbReference type="EMBL" id="AE013599">
    <property type="protein sequence ID" value="AAF46708.1"/>
    <property type="molecule type" value="Genomic_DNA"/>
</dbReference>
<dbReference type="EMBL" id="AE013599">
    <property type="protein sequence ID" value="AAM70863.1"/>
    <property type="molecule type" value="Genomic_DNA"/>
</dbReference>
<dbReference type="RefSeq" id="NP_477203.1">
    <property type="nucleotide sequence ID" value="NM_057855.6"/>
</dbReference>
<dbReference type="RefSeq" id="NP_726053.1">
    <property type="nucleotide sequence ID" value="NM_166437.4"/>
</dbReference>
<dbReference type="RefSeq" id="NP_726054.1">
    <property type="nucleotide sequence ID" value="NM_166438.4"/>
</dbReference>
<dbReference type="PDB" id="4V6W">
    <property type="method" value="EM"/>
    <property type="resolution" value="6.00 A"/>
    <property type="chains" value="Cb=1-76"/>
</dbReference>
<dbReference type="PDB" id="6XU6">
    <property type="method" value="EM"/>
    <property type="resolution" value="3.50 A"/>
    <property type="chains" value="Cb=2-76"/>
</dbReference>
<dbReference type="PDB" id="6XU7">
    <property type="method" value="EM"/>
    <property type="resolution" value="4.90 A"/>
    <property type="chains" value="Cb=2-76"/>
</dbReference>
<dbReference type="PDB" id="6XU8">
    <property type="method" value="EM"/>
    <property type="resolution" value="3.00 A"/>
    <property type="chains" value="Cb=2-76"/>
</dbReference>
<dbReference type="PDBsum" id="4V6W"/>
<dbReference type="PDBsum" id="6XU6"/>
<dbReference type="PDBsum" id="6XU7"/>
<dbReference type="PDBsum" id="6XU8"/>
<dbReference type="EMDB" id="EMD-10622"/>
<dbReference type="EMDB" id="EMD-10623"/>
<dbReference type="EMDB" id="EMD-10624"/>
<dbReference type="SMR" id="Q24154"/>
<dbReference type="BioGRID" id="63064">
    <property type="interactions" value="94"/>
</dbReference>
<dbReference type="DIP" id="DIP-17289N"/>
<dbReference type="FunCoup" id="Q24154">
    <property type="interactions" value="866"/>
</dbReference>
<dbReference type="IntAct" id="Q24154">
    <property type="interactions" value="1"/>
</dbReference>
<dbReference type="STRING" id="7227.FBpp0071519"/>
<dbReference type="iPTMnet" id="Q24154"/>
<dbReference type="PaxDb" id="7227-FBpp0071518"/>
<dbReference type="DNASU" id="37430"/>
<dbReference type="EnsemblMetazoa" id="FBtr0071592">
    <property type="protein sequence ID" value="FBpp0071518"/>
    <property type="gene ID" value="FBgn0016726"/>
</dbReference>
<dbReference type="EnsemblMetazoa" id="FBtr0071593">
    <property type="protein sequence ID" value="FBpp0071519"/>
    <property type="gene ID" value="FBgn0016726"/>
</dbReference>
<dbReference type="EnsemblMetazoa" id="FBtr0305669">
    <property type="protein sequence ID" value="FBpp0296949"/>
    <property type="gene ID" value="FBgn0016726"/>
</dbReference>
<dbReference type="GeneID" id="37430"/>
<dbReference type="KEGG" id="dme:Dmel_CG10071"/>
<dbReference type="AGR" id="FB:FBgn0016726"/>
<dbReference type="CTD" id="6159"/>
<dbReference type="FlyBase" id="FBgn0016726">
    <property type="gene designation" value="RpL29"/>
</dbReference>
<dbReference type="VEuPathDB" id="VectorBase:FBgn0016726"/>
<dbReference type="eggNOG" id="KOG3504">
    <property type="taxonomic scope" value="Eukaryota"/>
</dbReference>
<dbReference type="GeneTree" id="ENSGT00390000007084"/>
<dbReference type="HOGENOM" id="CLU_169255_1_1_1"/>
<dbReference type="InParanoid" id="Q24154"/>
<dbReference type="OMA" id="KKFRHES"/>
<dbReference type="OrthoDB" id="996720at2759"/>
<dbReference type="PhylomeDB" id="Q24154"/>
<dbReference type="Reactome" id="R-DME-156827">
    <property type="pathway name" value="L13a-mediated translational silencing of Ceruloplasmin expression"/>
</dbReference>
<dbReference type="Reactome" id="R-DME-1799339">
    <property type="pathway name" value="SRP-dependent cotranslational protein targeting to membrane"/>
</dbReference>
<dbReference type="Reactome" id="R-DME-72689">
    <property type="pathway name" value="Formation of a pool of free 40S subunits"/>
</dbReference>
<dbReference type="Reactome" id="R-DME-72706">
    <property type="pathway name" value="GTP hydrolysis and joining of the 60S ribosomal subunit"/>
</dbReference>
<dbReference type="Reactome" id="R-DME-975956">
    <property type="pathway name" value="Nonsense Mediated Decay (NMD) independent of the Exon Junction Complex (EJC)"/>
</dbReference>
<dbReference type="Reactome" id="R-DME-975957">
    <property type="pathway name" value="Nonsense Mediated Decay (NMD) enhanced by the Exon Junction Complex (EJC)"/>
</dbReference>
<dbReference type="BioGRID-ORCS" id="37430">
    <property type="hits" value="0 hits in 1 CRISPR screen"/>
</dbReference>
<dbReference type="GenomeRNAi" id="37430"/>
<dbReference type="PRO" id="PR:Q24154"/>
<dbReference type="Proteomes" id="UP000000803">
    <property type="component" value="Chromosome 2R"/>
</dbReference>
<dbReference type="Bgee" id="FBgn0016726">
    <property type="expression patterns" value="Expressed in wing disc and 288 other cell types or tissues"/>
</dbReference>
<dbReference type="ExpressionAtlas" id="Q24154">
    <property type="expression patterns" value="baseline and differential"/>
</dbReference>
<dbReference type="GO" id="GO:0022625">
    <property type="term" value="C:cytosolic large ribosomal subunit"/>
    <property type="evidence" value="ECO:0000318"/>
    <property type="project" value="GO_Central"/>
</dbReference>
<dbReference type="GO" id="GO:0022626">
    <property type="term" value="C:cytosolic ribosome"/>
    <property type="evidence" value="ECO:0000314"/>
    <property type="project" value="FlyBase"/>
</dbReference>
<dbReference type="GO" id="GO:0003735">
    <property type="term" value="F:structural constituent of ribosome"/>
    <property type="evidence" value="ECO:0000314"/>
    <property type="project" value="FlyBase"/>
</dbReference>
<dbReference type="GO" id="GO:0002181">
    <property type="term" value="P:cytoplasmic translation"/>
    <property type="evidence" value="ECO:0000318"/>
    <property type="project" value="GO_Central"/>
</dbReference>
<dbReference type="Gene3D" id="6.10.140.1730">
    <property type="match status" value="1"/>
</dbReference>
<dbReference type="InterPro" id="IPR002673">
    <property type="entry name" value="Ribosomal_eL29"/>
</dbReference>
<dbReference type="PANTHER" id="PTHR12884">
    <property type="entry name" value="60S RIBOSOMAL PROTEIN L29"/>
    <property type="match status" value="1"/>
</dbReference>
<dbReference type="PANTHER" id="PTHR12884:SF0">
    <property type="entry name" value="60S RIBOSOMAL PROTEIN L29"/>
    <property type="match status" value="1"/>
</dbReference>
<dbReference type="Pfam" id="PF01779">
    <property type="entry name" value="Ribosomal_L29e"/>
    <property type="match status" value="1"/>
</dbReference>
<keyword id="KW-0002">3D-structure</keyword>
<keyword id="KW-0597">Phosphoprotein</keyword>
<keyword id="KW-1185">Reference proteome</keyword>
<keyword id="KW-0687">Ribonucleoprotein</keyword>
<keyword id="KW-0689">Ribosomal protein</keyword>
<evidence type="ECO:0000256" key="1">
    <source>
        <dbReference type="SAM" id="MobiDB-lite"/>
    </source>
</evidence>
<evidence type="ECO:0000269" key="2">
    <source>
    </source>
</evidence>
<evidence type="ECO:0000305" key="3"/>
<accession>Q24154</accession>
<accession>A4UZR6</accession>
<accession>Q0E900</accession>
<accession>Q9W2I3</accession>
<protein>
    <recommendedName>
        <fullName evidence="3">Large ribosomal subunit protein eL29</fullName>
    </recommendedName>
    <alternativeName>
        <fullName>60S ribosomal protein L29</fullName>
    </alternativeName>
    <alternativeName>
        <fullName>L43</fullName>
    </alternativeName>
</protein>
<organism>
    <name type="scientific">Drosophila melanogaster</name>
    <name type="common">Fruit fly</name>
    <dbReference type="NCBI Taxonomy" id="7227"/>
    <lineage>
        <taxon>Eukaryota</taxon>
        <taxon>Metazoa</taxon>
        <taxon>Ecdysozoa</taxon>
        <taxon>Arthropoda</taxon>
        <taxon>Hexapoda</taxon>
        <taxon>Insecta</taxon>
        <taxon>Pterygota</taxon>
        <taxon>Neoptera</taxon>
        <taxon>Endopterygota</taxon>
        <taxon>Diptera</taxon>
        <taxon>Brachycera</taxon>
        <taxon>Muscomorpha</taxon>
        <taxon>Ephydroidea</taxon>
        <taxon>Drosophilidae</taxon>
        <taxon>Drosophila</taxon>
        <taxon>Sophophora</taxon>
    </lineage>
</organism>